<sequence>MALMVKAEGGNGGKRWDDGFDYEGVTKIYVRGGLEGIQFIKFDYVKDGKTITGPIHGVSGRGLTQTFEINHLQKEYLLSIEGYYDISTGVIQSIQFKTNQQTSDMMGFNEGTKFSLRSMRGRIIGFHGFADKNLYSLRAYYIRIPATKSAMDGGQNTGRGYDHGGDYDGVRKVYVTFDGTSIRNMRVDYDKVGQVECYEYGVKIGTQNQFTINYPYECITSVGGSYADTQPYRCIVLRSLTFKTSNGRTSVFGKETGTTFLLESQGNAIVGFHGRVGSCVDSIGEYYAPFSPYPPPTEKLEGQGGDGGDSWDDGAFLNVKKVCIGQGQFGIVSVKFEYENDASEVVVGDEHGKATLLGYEEFELDYPSEYITSVEACQDKVMGAETGVLTMLRFKTNIRISPSFGLKAGFNFVLEKEGHKINGFHGKSSSMLHQIGIHVIPITE</sequence>
<comment type="similarity">
    <text evidence="2 3">Belongs to the jacalin lectin family.</text>
</comment>
<dbReference type="EMBL" id="AB026643">
    <property type="protein sequence ID" value="BAB09251.1"/>
    <property type="molecule type" value="Genomic_DNA"/>
</dbReference>
<dbReference type="EMBL" id="CP002688">
    <property type="protein sequence ID" value="AED94032.1"/>
    <property type="molecule type" value="Genomic_DNA"/>
</dbReference>
<dbReference type="RefSeq" id="NP_198444.1">
    <property type="nucleotide sequence ID" value="NM_122986.1"/>
</dbReference>
<dbReference type="SMR" id="Q9FGC4"/>
<dbReference type="FunCoup" id="Q9FGC4">
    <property type="interactions" value="10"/>
</dbReference>
<dbReference type="STRING" id="3702.Q9FGC4"/>
<dbReference type="iPTMnet" id="Q9FGC4"/>
<dbReference type="PaxDb" id="3702-AT5G35950.1"/>
<dbReference type="ProteomicsDB" id="238975"/>
<dbReference type="EnsemblPlants" id="AT5G35950.1">
    <property type="protein sequence ID" value="AT5G35950.1"/>
    <property type="gene ID" value="AT5G35950"/>
</dbReference>
<dbReference type="GeneID" id="833586"/>
<dbReference type="Gramene" id="AT5G35950.1">
    <property type="protein sequence ID" value="AT5G35950.1"/>
    <property type="gene ID" value="AT5G35950"/>
</dbReference>
<dbReference type="KEGG" id="ath:AT5G35950"/>
<dbReference type="Araport" id="AT5G35950"/>
<dbReference type="TAIR" id="AT5G35950"/>
<dbReference type="HOGENOM" id="CLU_041730_0_0_1"/>
<dbReference type="InParanoid" id="Q9FGC4"/>
<dbReference type="PhylomeDB" id="Q9FGC4"/>
<dbReference type="PRO" id="PR:Q9FGC4"/>
<dbReference type="Proteomes" id="UP000006548">
    <property type="component" value="Chromosome 5"/>
</dbReference>
<dbReference type="ExpressionAtlas" id="Q9FGC4">
    <property type="expression patterns" value="baseline"/>
</dbReference>
<dbReference type="GO" id="GO:0030246">
    <property type="term" value="F:carbohydrate binding"/>
    <property type="evidence" value="ECO:0007669"/>
    <property type="project" value="UniProtKB-KW"/>
</dbReference>
<dbReference type="CDD" id="cd09612">
    <property type="entry name" value="Jacalin"/>
    <property type="match status" value="3"/>
</dbReference>
<dbReference type="FunFam" id="2.100.10.30:FF:000001">
    <property type="entry name" value="Jacalin-related lectin 33"/>
    <property type="match status" value="3"/>
</dbReference>
<dbReference type="Gene3D" id="2.100.10.30">
    <property type="entry name" value="Jacalin-like lectin domain"/>
    <property type="match status" value="3"/>
</dbReference>
<dbReference type="InterPro" id="IPR001229">
    <property type="entry name" value="Jacalin-like_lectin_dom"/>
</dbReference>
<dbReference type="InterPro" id="IPR033734">
    <property type="entry name" value="Jacalin-like_lectin_dom_plant"/>
</dbReference>
<dbReference type="InterPro" id="IPR036404">
    <property type="entry name" value="Jacalin-like_lectin_dom_sf"/>
</dbReference>
<dbReference type="PANTHER" id="PTHR47293:SF66">
    <property type="entry name" value="JACALIN-RELATED LECTIN 11-RELATED"/>
    <property type="match status" value="1"/>
</dbReference>
<dbReference type="PANTHER" id="PTHR47293">
    <property type="entry name" value="JACALIN-RELATED LECTIN 3"/>
    <property type="match status" value="1"/>
</dbReference>
<dbReference type="Pfam" id="PF01419">
    <property type="entry name" value="Jacalin"/>
    <property type="match status" value="3"/>
</dbReference>
<dbReference type="SMART" id="SM00915">
    <property type="entry name" value="Jacalin"/>
    <property type="match status" value="3"/>
</dbReference>
<dbReference type="SUPFAM" id="SSF51101">
    <property type="entry name" value="Mannose-binding lectins"/>
    <property type="match status" value="3"/>
</dbReference>
<dbReference type="PROSITE" id="PS51752">
    <property type="entry name" value="JACALIN_LECTIN"/>
    <property type="match status" value="3"/>
</dbReference>
<evidence type="ECO:0000250" key="1">
    <source>
        <dbReference type="UniProtKB" id="Q9FGC5"/>
    </source>
</evidence>
<evidence type="ECO:0000255" key="2">
    <source>
        <dbReference type="PROSITE-ProRule" id="PRU01088"/>
    </source>
</evidence>
<evidence type="ECO:0000305" key="3"/>
<accession>Q9FGC4</accession>
<protein>
    <recommendedName>
        <fullName>Jacalin-related lectin 42</fullName>
    </recommendedName>
</protein>
<name>JAL42_ARATH</name>
<reference key="1">
    <citation type="submission" date="1999-04" db="EMBL/GenBank/DDBJ databases">
        <title>Structural analysis of Arabidopsis thaliana chromosome 5. XI.</title>
        <authorList>
            <person name="Kaneko T."/>
            <person name="Katoh T."/>
            <person name="Asamizu E."/>
            <person name="Sato S."/>
            <person name="Nakamura Y."/>
            <person name="Kotani H."/>
            <person name="Tabata S."/>
        </authorList>
    </citation>
    <scope>NUCLEOTIDE SEQUENCE [LARGE SCALE GENOMIC DNA]</scope>
</reference>
<reference key="2">
    <citation type="journal article" date="2017" name="Plant J.">
        <title>Araport11: a complete reannotation of the Arabidopsis thaliana reference genome.</title>
        <authorList>
            <person name="Cheng C.Y."/>
            <person name="Krishnakumar V."/>
            <person name="Chan A.P."/>
            <person name="Thibaud-Nissen F."/>
            <person name="Schobel S."/>
            <person name="Town C.D."/>
        </authorList>
    </citation>
    <scope>GENOME REANNOTATION</scope>
    <source>
        <strain>cv. Columbia</strain>
    </source>
</reference>
<reference key="3">
    <citation type="journal article" date="2008" name="Plant Cell Physiol.">
        <title>Antagonistic jacalin-related lectins regulate the size of ER body-type beta-glucosidase complexes in Arabidopsis thaliana.</title>
        <authorList>
            <person name="Nagano A.J."/>
            <person name="Fukao Y."/>
            <person name="Fujiwara M."/>
            <person name="Nishimura M."/>
            <person name="Hara-Nishimura I."/>
        </authorList>
    </citation>
    <scope>GENE FAMILY</scope>
    <scope>NOMENCLATURE</scope>
</reference>
<proteinExistence type="inferred from homology"/>
<organism>
    <name type="scientific">Arabidopsis thaliana</name>
    <name type="common">Mouse-ear cress</name>
    <dbReference type="NCBI Taxonomy" id="3702"/>
    <lineage>
        <taxon>Eukaryota</taxon>
        <taxon>Viridiplantae</taxon>
        <taxon>Streptophyta</taxon>
        <taxon>Embryophyta</taxon>
        <taxon>Tracheophyta</taxon>
        <taxon>Spermatophyta</taxon>
        <taxon>Magnoliopsida</taxon>
        <taxon>eudicotyledons</taxon>
        <taxon>Gunneridae</taxon>
        <taxon>Pentapetalae</taxon>
        <taxon>rosids</taxon>
        <taxon>malvids</taxon>
        <taxon>Brassicales</taxon>
        <taxon>Brassicaceae</taxon>
        <taxon>Camelineae</taxon>
        <taxon>Arabidopsis</taxon>
    </lineage>
</organism>
<gene>
    <name type="primary">JAL42</name>
    <name type="ordered locus">At5g35950</name>
    <name type="ORF">MEE13.5</name>
</gene>
<keyword id="KW-0007">Acetylation</keyword>
<keyword id="KW-0430">Lectin</keyword>
<keyword id="KW-1185">Reference proteome</keyword>
<keyword id="KW-0677">Repeat</keyword>
<feature type="initiator methionine" description="Removed" evidence="1">
    <location>
        <position position="1"/>
    </location>
</feature>
<feature type="chain" id="PRO_0000430399" description="Jacalin-related lectin 42">
    <location>
        <begin position="2"/>
        <end position="444"/>
    </location>
</feature>
<feature type="domain" description="Jacalin-type lectin 1" evidence="2">
    <location>
        <begin position="2"/>
        <end position="143"/>
    </location>
</feature>
<feature type="domain" description="Jacalin-type lectin 2" evidence="2">
    <location>
        <begin position="146"/>
        <end position="289"/>
    </location>
</feature>
<feature type="domain" description="Jacalin-type lectin 3" evidence="2">
    <location>
        <begin position="297"/>
        <end position="441"/>
    </location>
</feature>
<feature type="modified residue" description="N-acetylalanine" evidence="1">
    <location>
        <position position="2"/>
    </location>
</feature>